<evidence type="ECO:0000250" key="1">
    <source>
        <dbReference type="UniProtKB" id="D3ZMK9"/>
    </source>
</evidence>
<evidence type="ECO:0000250" key="2">
    <source>
        <dbReference type="UniProtKB" id="Q86YV5"/>
    </source>
</evidence>
<evidence type="ECO:0000255" key="3">
    <source>
        <dbReference type="PROSITE-ProRule" id="PRU00159"/>
    </source>
</evidence>
<evidence type="ECO:0000256" key="4">
    <source>
        <dbReference type="SAM" id="MobiDB-lite"/>
    </source>
</evidence>
<evidence type="ECO:0000269" key="5">
    <source>
    </source>
</evidence>
<evidence type="ECO:0000303" key="6">
    <source>
    </source>
</evidence>
<evidence type="ECO:0000305" key="7"/>
<evidence type="ECO:0000312" key="8">
    <source>
        <dbReference type="MGI" id="MGI:1196223"/>
    </source>
</evidence>
<evidence type="ECO:0007744" key="9">
    <source>
    </source>
</evidence>
<evidence type="ECO:0007744" key="10">
    <source>
    </source>
</evidence>
<gene>
    <name evidence="8" type="primary">Prag1</name>
    <name evidence="8" type="synonym">D8Ertd82e</name>
    <name evidence="6" type="synonym">Nack</name>
    <name type="synonym">Sgk223</name>
</gene>
<dbReference type="EMBL" id="AC121858">
    <property type="status" value="NOT_ANNOTATED_CDS"/>
    <property type="molecule type" value="Genomic_DNA"/>
</dbReference>
<dbReference type="EMBL" id="AK036672">
    <property type="protein sequence ID" value="BAC29528.1"/>
    <property type="status" value="ALT_INIT"/>
    <property type="molecule type" value="mRNA"/>
</dbReference>
<dbReference type="EMBL" id="AK220205">
    <property type="protein sequence ID" value="BAD90130.1"/>
    <property type="status" value="ALT_INIT"/>
    <property type="molecule type" value="mRNA"/>
</dbReference>
<dbReference type="EMBL" id="BC089024">
    <property type="protein sequence ID" value="AAH89024.1"/>
    <property type="status" value="ALT_INIT"/>
    <property type="molecule type" value="mRNA"/>
</dbReference>
<dbReference type="CCDS" id="CCDS22247.2"/>
<dbReference type="RefSeq" id="NP_001413501.1">
    <property type="nucleotide sequence ID" value="NM_001426572.1"/>
</dbReference>
<dbReference type="RefSeq" id="NP_766499.2">
    <property type="nucleotide sequence ID" value="NM_172911.4"/>
</dbReference>
<dbReference type="RefSeq" id="XP_011240439.1">
    <property type="nucleotide sequence ID" value="XM_011242137.1"/>
</dbReference>
<dbReference type="SMR" id="Q571I4"/>
<dbReference type="BioGRID" id="232647">
    <property type="interactions" value="8"/>
</dbReference>
<dbReference type="FunCoup" id="Q571I4">
    <property type="interactions" value="1537"/>
</dbReference>
<dbReference type="IntAct" id="Q571I4">
    <property type="interactions" value="2"/>
</dbReference>
<dbReference type="STRING" id="10090.ENSMUSP00000106118"/>
<dbReference type="GlyGen" id="Q571I4">
    <property type="glycosylation" value="5 sites, 1 O-linked glycan (4 sites)"/>
</dbReference>
<dbReference type="iPTMnet" id="Q571I4"/>
<dbReference type="PhosphoSitePlus" id="Q571I4"/>
<dbReference type="jPOST" id="Q571I4"/>
<dbReference type="PaxDb" id="10090-ENSMUSP00000106118"/>
<dbReference type="PeptideAtlas" id="Q571I4"/>
<dbReference type="ProteomicsDB" id="289882"/>
<dbReference type="ProteomicsDB" id="310231"/>
<dbReference type="Antibodypedia" id="73468">
    <property type="antibodies" value="130 antibodies from 28 providers"/>
</dbReference>
<dbReference type="DNASU" id="244418"/>
<dbReference type="Ensembl" id="ENSMUST00000110492.2">
    <property type="protein sequence ID" value="ENSMUSP00000106118.2"/>
    <property type="gene ID" value="ENSMUSG00000050271.13"/>
</dbReference>
<dbReference type="GeneID" id="244418"/>
<dbReference type="KEGG" id="mmu:244418"/>
<dbReference type="AGR" id="MGI:1196223"/>
<dbReference type="CTD" id="157285"/>
<dbReference type="MGI" id="MGI:1196223">
    <property type="gene designation" value="Prag1"/>
</dbReference>
<dbReference type="VEuPathDB" id="HostDB:ENSMUSG00000050271"/>
<dbReference type="eggNOG" id="ENOG502QVUZ">
    <property type="taxonomic scope" value="Eukaryota"/>
</dbReference>
<dbReference type="GeneTree" id="ENSGT00940000157066"/>
<dbReference type="HOGENOM" id="CLU_005467_0_0_1"/>
<dbReference type="InParanoid" id="Q571I4"/>
<dbReference type="OMA" id="DLKMSAC"/>
<dbReference type="OrthoDB" id="9886644at2759"/>
<dbReference type="PhylomeDB" id="Q571I4"/>
<dbReference type="TreeFam" id="TF331193"/>
<dbReference type="Reactome" id="R-MMU-9696270">
    <property type="pathway name" value="RND2 GTPase cycle"/>
</dbReference>
<dbReference type="BioGRID-ORCS" id="244418">
    <property type="hits" value="1 hit in 75 CRISPR screens"/>
</dbReference>
<dbReference type="ChiTaRS" id="Prag1">
    <property type="organism name" value="mouse"/>
</dbReference>
<dbReference type="PRO" id="PR:Q571I4"/>
<dbReference type="Proteomes" id="UP000000589">
    <property type="component" value="Chromosome 8"/>
</dbReference>
<dbReference type="RNAct" id="Q571I4">
    <property type="molecule type" value="protein"/>
</dbReference>
<dbReference type="Bgee" id="ENSMUSG00000050271">
    <property type="expression patterns" value="Expressed in dorsal pancreas and 193 other cell types or tissues"/>
</dbReference>
<dbReference type="GO" id="GO:0005737">
    <property type="term" value="C:cytoplasm"/>
    <property type="evidence" value="ECO:0000250"/>
    <property type="project" value="UniProtKB"/>
</dbReference>
<dbReference type="GO" id="GO:0005925">
    <property type="term" value="C:focal adhesion"/>
    <property type="evidence" value="ECO:0000250"/>
    <property type="project" value="UniProtKB"/>
</dbReference>
<dbReference type="GO" id="GO:0005634">
    <property type="term" value="C:nucleus"/>
    <property type="evidence" value="ECO:0000314"/>
    <property type="project" value="UniProtKB"/>
</dbReference>
<dbReference type="GO" id="GO:0042802">
    <property type="term" value="F:identical protein binding"/>
    <property type="evidence" value="ECO:0007669"/>
    <property type="project" value="Ensembl"/>
</dbReference>
<dbReference type="GO" id="GO:0004672">
    <property type="term" value="F:protein kinase activity"/>
    <property type="evidence" value="ECO:0007669"/>
    <property type="project" value="InterPro"/>
</dbReference>
<dbReference type="GO" id="GO:0016477">
    <property type="term" value="P:cell migration"/>
    <property type="evidence" value="ECO:0007669"/>
    <property type="project" value="Ensembl"/>
</dbReference>
<dbReference type="GO" id="GO:0010977">
    <property type="term" value="P:negative regulation of neuron projection development"/>
    <property type="evidence" value="ECO:0000250"/>
    <property type="project" value="UniProtKB"/>
</dbReference>
<dbReference type="GO" id="GO:0035025">
    <property type="term" value="P:positive regulation of Rho protein signal transduction"/>
    <property type="evidence" value="ECO:0000250"/>
    <property type="project" value="UniProtKB"/>
</dbReference>
<dbReference type="GO" id="GO:2000145">
    <property type="term" value="P:regulation of cell motility"/>
    <property type="evidence" value="ECO:0000250"/>
    <property type="project" value="UniProtKB"/>
</dbReference>
<dbReference type="GO" id="GO:0008360">
    <property type="term" value="P:regulation of cell shape"/>
    <property type="evidence" value="ECO:0000250"/>
    <property type="project" value="UniProtKB"/>
</dbReference>
<dbReference type="GO" id="GO:0008593">
    <property type="term" value="P:regulation of Notch signaling pathway"/>
    <property type="evidence" value="ECO:0000315"/>
    <property type="project" value="UniProtKB"/>
</dbReference>
<dbReference type="FunFam" id="1.10.510.10:FF:000510">
    <property type="entry name" value="Inactive tyrosine-protein kinase PRAG1"/>
    <property type="match status" value="1"/>
</dbReference>
<dbReference type="Gene3D" id="1.10.510.10">
    <property type="entry name" value="Transferase(Phosphotransferase) domain 1"/>
    <property type="match status" value="1"/>
</dbReference>
<dbReference type="InterPro" id="IPR011009">
    <property type="entry name" value="Kinase-like_dom_sf"/>
</dbReference>
<dbReference type="InterPro" id="IPR051511">
    <property type="entry name" value="MitoQC_Scaffold_Kinases"/>
</dbReference>
<dbReference type="InterPro" id="IPR000719">
    <property type="entry name" value="Prot_kinase_dom"/>
</dbReference>
<dbReference type="InterPro" id="IPR008266">
    <property type="entry name" value="Tyr_kinase_AS"/>
</dbReference>
<dbReference type="PANTHER" id="PTHR22972:SF3">
    <property type="entry name" value="INACTIVE TYROSINE-PROTEIN KINASE PRAG1"/>
    <property type="match status" value="1"/>
</dbReference>
<dbReference type="PANTHER" id="PTHR22972">
    <property type="entry name" value="SERINE/THREONINE PROTEIN KINASE"/>
    <property type="match status" value="1"/>
</dbReference>
<dbReference type="Pfam" id="PF00069">
    <property type="entry name" value="Pkinase"/>
    <property type="match status" value="1"/>
</dbReference>
<dbReference type="SMART" id="SM00220">
    <property type="entry name" value="S_TKc"/>
    <property type="match status" value="1"/>
</dbReference>
<dbReference type="SUPFAM" id="SSF56112">
    <property type="entry name" value="Protein kinase-like (PK-like)"/>
    <property type="match status" value="1"/>
</dbReference>
<dbReference type="PROSITE" id="PS50011">
    <property type="entry name" value="PROTEIN_KINASE_DOM"/>
    <property type="match status" value="1"/>
</dbReference>
<dbReference type="PROSITE" id="PS00109">
    <property type="entry name" value="PROTEIN_KINASE_TYR"/>
    <property type="match status" value="1"/>
</dbReference>
<sequence length="1373" mass="147945">MSACSDFVEHIWKPGSCKNCFCLRSDHQPTAGHPKARANSLPAGTRLPARPENCRLDDEGVNGLAYSKPTIAVKPTMMTSETSDLWTEASLSAEVPKVNWRRTPGKLLLPKQEDEPIVYLGSFRGLQKPASPLACTDGNSRCPPAYTMVGLHNLEARVDRNTAFQPVSFQEEKAGREELPSAHESFRQKLAAFAGMTSSCPKGPRPCTSPQPLRESLPSEDDSDQRCSPSGDSEGGEYCSILDCCPESKDAVHSTEGSGRRGGDCSPTCREQGPRTRPTEEEKQGLSFPRECCGQGSTANPPRLGPKKPSLNSEAASSSDGLSCGSSRSGASSPFAPHLENDYCSLVKEPASGKQQDLSGHFLTSGKCVGQAAELQPASLLRDPVQPEPIYAESAKRKKAAPGPPRPEPKKEQVPAGHSQGQVWTGDTWIQKTPPSWSQDREGANPAPQVATTITVIAAHPEEDHRTIYLSSPDSAVGVQWPRGPSNQDLQAGEEEPLVAQGLTSRESHPHNVTENTAKEKPAIPPKLSKSSPGGSPVSPAPPLTDHSDGNTGGSSVGPQLLSRVPANLTSSCHTNGVATAGDSAKCPPPATSSSVLDQRRPRYQTGAWSRQCRIEEEEEVGQELSQSWGRELENGTADHSNSSTWHRLHPIDGTSGQNSKTNSGMSKSASFAFEFPKDRGRLEAFSPPPPPPKSRHLLKMNKSSSDLEKVSQSSAESLSPSFRGAHVSFTTGSTDSLASDSRPCSDGGPSYEPTHSPTISGKKLFAPVPFPSGSTEDVSPGGGPAQPPPLPQKKIVSRAASSPDGFFWTQGSPKPRTASPKLNLSHSETNVCAHDEPPFNCSLNSGNRSHHVFSSSEPLGKAFKGNAPWAPALGLANSKGGCGSPSLQCRAATSTSSSQLSVSSQASSSSTQLQLHSLLSSISSKEGTYAKLGGLYTQSLARLVTKCEDLFMGGQKKELRFNENYWSLFKLTCNKPCCDSGDAIYYCATCSEDPGSIYAVKICKTPEPKSASYCSPSVPVHFNIQQDCGHFVASVPSSMLASPDTSSKDTAPAVSPQPPAQEQDCVVVITREVPHQTASDFVRDSMASHRAEPEVYERRVCFLLLQLCNGLEHLKEHGIIHRDLCLENLLLAHCNPQSSPGPSATPTVPTTTSRCPSAAPAATTACQGGPGEKQLPRLIISNFLKAKQKPGGTTNLQQKKSQARLAPEIVSASQYRKFDEFQTGILIYELLHQPNPFEVRAQLRERDYRREDLPPLPTLSLYSPGLQQLAHLLLEADPIKRIRIGEAKRVLQCLLWGPRRELVEQPCTSEEVLCNTLHNWIDMKRALMMMKFAEKAVDRRRGVELEDWLCCQYLASAEPGALLQSLKLLQLL</sequence>
<protein>
    <recommendedName>
        <fullName evidence="7">Inactive tyrosine-protein kinase PRAG1</fullName>
    </recommendedName>
    <alternativeName>
        <fullName evidence="6">Notch activation complex kinase</fullName>
    </alternativeName>
    <alternativeName>
        <fullName evidence="8">PEAK1-related kinase-activating pseudokinase 1</fullName>
    </alternativeName>
    <alternativeName>
        <fullName>Sugen kinase 223</fullName>
    </alternativeName>
    <alternativeName>
        <fullName>Tyrosine-protein kinase SgK223</fullName>
    </alternativeName>
</protein>
<reference key="1">
    <citation type="journal article" date="2009" name="PLoS Biol.">
        <title>Lineage-specific biology revealed by a finished genome assembly of the mouse.</title>
        <authorList>
            <person name="Church D.M."/>
            <person name="Goodstadt L."/>
            <person name="Hillier L.W."/>
            <person name="Zody M.C."/>
            <person name="Goldstein S."/>
            <person name="She X."/>
            <person name="Bult C.J."/>
            <person name="Agarwala R."/>
            <person name="Cherry J.L."/>
            <person name="DiCuccio M."/>
            <person name="Hlavina W."/>
            <person name="Kapustin Y."/>
            <person name="Meric P."/>
            <person name="Maglott D."/>
            <person name="Birtle Z."/>
            <person name="Marques A.C."/>
            <person name="Graves T."/>
            <person name="Zhou S."/>
            <person name="Teague B."/>
            <person name="Potamousis K."/>
            <person name="Churas C."/>
            <person name="Place M."/>
            <person name="Herschleb J."/>
            <person name="Runnheim R."/>
            <person name="Forrest D."/>
            <person name="Amos-Landgraf J."/>
            <person name="Schwartz D.C."/>
            <person name="Cheng Z."/>
            <person name="Lindblad-Toh K."/>
            <person name="Eichler E.E."/>
            <person name="Ponting C.P."/>
        </authorList>
    </citation>
    <scope>NUCLEOTIDE SEQUENCE [LARGE SCALE GENOMIC DNA]</scope>
    <source>
        <strain>C57BL/6J</strain>
    </source>
</reference>
<reference key="2">
    <citation type="journal article" date="2005" name="Science">
        <title>The transcriptional landscape of the mammalian genome.</title>
        <authorList>
            <person name="Carninci P."/>
            <person name="Kasukawa T."/>
            <person name="Katayama S."/>
            <person name="Gough J."/>
            <person name="Frith M.C."/>
            <person name="Maeda N."/>
            <person name="Oyama R."/>
            <person name="Ravasi T."/>
            <person name="Lenhard B."/>
            <person name="Wells C."/>
            <person name="Kodzius R."/>
            <person name="Shimokawa K."/>
            <person name="Bajic V.B."/>
            <person name="Brenner S.E."/>
            <person name="Batalov S."/>
            <person name="Forrest A.R."/>
            <person name="Zavolan M."/>
            <person name="Davis M.J."/>
            <person name="Wilming L.G."/>
            <person name="Aidinis V."/>
            <person name="Allen J.E."/>
            <person name="Ambesi-Impiombato A."/>
            <person name="Apweiler R."/>
            <person name="Aturaliya R.N."/>
            <person name="Bailey T.L."/>
            <person name="Bansal M."/>
            <person name="Baxter L."/>
            <person name="Beisel K.W."/>
            <person name="Bersano T."/>
            <person name="Bono H."/>
            <person name="Chalk A.M."/>
            <person name="Chiu K.P."/>
            <person name="Choudhary V."/>
            <person name="Christoffels A."/>
            <person name="Clutterbuck D.R."/>
            <person name="Crowe M.L."/>
            <person name="Dalla E."/>
            <person name="Dalrymple B.P."/>
            <person name="de Bono B."/>
            <person name="Della Gatta G."/>
            <person name="di Bernardo D."/>
            <person name="Down T."/>
            <person name="Engstrom P."/>
            <person name="Fagiolini M."/>
            <person name="Faulkner G."/>
            <person name="Fletcher C.F."/>
            <person name="Fukushima T."/>
            <person name="Furuno M."/>
            <person name="Futaki S."/>
            <person name="Gariboldi M."/>
            <person name="Georgii-Hemming P."/>
            <person name="Gingeras T.R."/>
            <person name="Gojobori T."/>
            <person name="Green R.E."/>
            <person name="Gustincich S."/>
            <person name="Harbers M."/>
            <person name="Hayashi Y."/>
            <person name="Hensch T.K."/>
            <person name="Hirokawa N."/>
            <person name="Hill D."/>
            <person name="Huminiecki L."/>
            <person name="Iacono M."/>
            <person name="Ikeo K."/>
            <person name="Iwama A."/>
            <person name="Ishikawa T."/>
            <person name="Jakt M."/>
            <person name="Kanapin A."/>
            <person name="Katoh M."/>
            <person name="Kawasawa Y."/>
            <person name="Kelso J."/>
            <person name="Kitamura H."/>
            <person name="Kitano H."/>
            <person name="Kollias G."/>
            <person name="Krishnan S.P."/>
            <person name="Kruger A."/>
            <person name="Kummerfeld S.K."/>
            <person name="Kurochkin I.V."/>
            <person name="Lareau L.F."/>
            <person name="Lazarevic D."/>
            <person name="Lipovich L."/>
            <person name="Liu J."/>
            <person name="Liuni S."/>
            <person name="McWilliam S."/>
            <person name="Madan Babu M."/>
            <person name="Madera M."/>
            <person name="Marchionni L."/>
            <person name="Matsuda H."/>
            <person name="Matsuzawa S."/>
            <person name="Miki H."/>
            <person name="Mignone F."/>
            <person name="Miyake S."/>
            <person name="Morris K."/>
            <person name="Mottagui-Tabar S."/>
            <person name="Mulder N."/>
            <person name="Nakano N."/>
            <person name="Nakauchi H."/>
            <person name="Ng P."/>
            <person name="Nilsson R."/>
            <person name="Nishiguchi S."/>
            <person name="Nishikawa S."/>
            <person name="Nori F."/>
            <person name="Ohara O."/>
            <person name="Okazaki Y."/>
            <person name="Orlando V."/>
            <person name="Pang K.C."/>
            <person name="Pavan W.J."/>
            <person name="Pavesi G."/>
            <person name="Pesole G."/>
            <person name="Petrovsky N."/>
            <person name="Piazza S."/>
            <person name="Reed J."/>
            <person name="Reid J.F."/>
            <person name="Ring B.Z."/>
            <person name="Ringwald M."/>
            <person name="Rost B."/>
            <person name="Ruan Y."/>
            <person name="Salzberg S.L."/>
            <person name="Sandelin A."/>
            <person name="Schneider C."/>
            <person name="Schoenbach C."/>
            <person name="Sekiguchi K."/>
            <person name="Semple C.A."/>
            <person name="Seno S."/>
            <person name="Sessa L."/>
            <person name="Sheng Y."/>
            <person name="Shibata Y."/>
            <person name="Shimada H."/>
            <person name="Shimada K."/>
            <person name="Silva D."/>
            <person name="Sinclair B."/>
            <person name="Sperling S."/>
            <person name="Stupka E."/>
            <person name="Sugiura K."/>
            <person name="Sultana R."/>
            <person name="Takenaka Y."/>
            <person name="Taki K."/>
            <person name="Tammoja K."/>
            <person name="Tan S.L."/>
            <person name="Tang S."/>
            <person name="Taylor M.S."/>
            <person name="Tegner J."/>
            <person name="Teichmann S.A."/>
            <person name="Ueda H.R."/>
            <person name="van Nimwegen E."/>
            <person name="Verardo R."/>
            <person name="Wei C.L."/>
            <person name="Yagi K."/>
            <person name="Yamanishi H."/>
            <person name="Zabarovsky E."/>
            <person name="Zhu S."/>
            <person name="Zimmer A."/>
            <person name="Hide W."/>
            <person name="Bult C."/>
            <person name="Grimmond S.M."/>
            <person name="Teasdale R.D."/>
            <person name="Liu E.T."/>
            <person name="Brusic V."/>
            <person name="Quackenbush J."/>
            <person name="Wahlestedt C."/>
            <person name="Mattick J.S."/>
            <person name="Hume D.A."/>
            <person name="Kai C."/>
            <person name="Sasaki D."/>
            <person name="Tomaru Y."/>
            <person name="Fukuda S."/>
            <person name="Kanamori-Katayama M."/>
            <person name="Suzuki M."/>
            <person name="Aoki J."/>
            <person name="Arakawa T."/>
            <person name="Iida J."/>
            <person name="Imamura K."/>
            <person name="Itoh M."/>
            <person name="Kato T."/>
            <person name="Kawaji H."/>
            <person name="Kawagashira N."/>
            <person name="Kawashima T."/>
            <person name="Kojima M."/>
            <person name="Kondo S."/>
            <person name="Konno H."/>
            <person name="Nakano K."/>
            <person name="Ninomiya N."/>
            <person name="Nishio T."/>
            <person name="Okada M."/>
            <person name="Plessy C."/>
            <person name="Shibata K."/>
            <person name="Shiraki T."/>
            <person name="Suzuki S."/>
            <person name="Tagami M."/>
            <person name="Waki K."/>
            <person name="Watahiki A."/>
            <person name="Okamura-Oho Y."/>
            <person name="Suzuki H."/>
            <person name="Kawai J."/>
            <person name="Hayashizaki Y."/>
        </authorList>
    </citation>
    <scope>NUCLEOTIDE SEQUENCE [LARGE SCALE MRNA] OF 154-1373</scope>
    <source>
        <strain>C57BL/6J</strain>
        <tissue>Bone</tissue>
    </source>
</reference>
<reference key="3">
    <citation type="submission" date="2005-02" db="EMBL/GenBank/DDBJ databases">
        <title>Prediction of the coding sequences of mouse homologues of KIAA gene. The complete nucleotide sequences of mouse KIAA-homologous cDNAs identified by screening of terminal sequences of cDNA clones randomly sampled from size-fractionated libraries.</title>
        <authorList>
            <person name="Okazaki N."/>
            <person name="Kikuno R.F."/>
            <person name="Ohara R."/>
            <person name="Inamoto S."/>
            <person name="Nagase T."/>
            <person name="Ohara O."/>
            <person name="Koga H."/>
        </authorList>
    </citation>
    <scope>NUCLEOTIDE SEQUENCE [LARGE SCALE MRNA] OF 190-1373</scope>
    <source>
        <tissue>Spleen</tissue>
    </source>
</reference>
<reference key="4">
    <citation type="journal article" date="2004" name="Genome Res.">
        <title>The status, quality, and expansion of the NIH full-length cDNA project: the Mammalian Gene Collection (MGC).</title>
        <authorList>
            <consortium name="The MGC Project Team"/>
        </authorList>
    </citation>
    <scope>NUCLEOTIDE SEQUENCE [LARGE SCALE MRNA] OF 86-1373</scope>
    <source>
        <strain>C57BL/6J</strain>
        <tissue>Eye</tissue>
    </source>
</reference>
<reference key="5">
    <citation type="journal article" date="2005" name="Nat. Biotechnol.">
        <title>Immunoaffinity profiling of tyrosine phosphorylation in cancer cells.</title>
        <authorList>
            <person name="Rush J."/>
            <person name="Moritz A."/>
            <person name="Lee K.A."/>
            <person name="Guo A."/>
            <person name="Goss V.L."/>
            <person name="Spek E.J."/>
            <person name="Zhang H."/>
            <person name="Zha X.-M."/>
            <person name="Polakiewicz R.D."/>
            <person name="Comb M.J."/>
        </authorList>
    </citation>
    <scope>PHOSPHORYLATION [LARGE SCALE ANALYSIS] AT TYR-391</scope>
    <scope>IDENTIFICATION BY MASS SPECTROMETRY [LARGE SCALE ANALYSIS]</scope>
</reference>
<reference key="6">
    <citation type="journal article" date="2009" name="Immunity">
        <title>The phagosomal proteome in interferon-gamma-activated macrophages.</title>
        <authorList>
            <person name="Trost M."/>
            <person name="English L."/>
            <person name="Lemieux S."/>
            <person name="Courcelles M."/>
            <person name="Desjardins M."/>
            <person name="Thibault P."/>
        </authorList>
    </citation>
    <scope>PHOSPHORYLATION [LARGE SCALE ANALYSIS] AT SER-720</scope>
    <scope>IDENTIFICATION BY MASS SPECTROMETRY [LARGE SCALE ANALYSIS]</scope>
</reference>
<reference key="7">
    <citation type="journal article" date="2010" name="Cell">
        <title>A tissue-specific atlas of mouse protein phosphorylation and expression.</title>
        <authorList>
            <person name="Huttlin E.L."/>
            <person name="Jedrychowski M.P."/>
            <person name="Elias J.E."/>
            <person name="Goswami T."/>
            <person name="Rad R."/>
            <person name="Beausoleil S.A."/>
            <person name="Villen J."/>
            <person name="Haas W."/>
            <person name="Sowa M.E."/>
            <person name="Gygi S.P."/>
        </authorList>
    </citation>
    <scope>IDENTIFICATION BY MASS SPECTROMETRY [LARGE SCALE ANALYSIS]</scope>
    <source>
        <tissue>Brown adipose tissue</tissue>
    </source>
</reference>
<reference key="8">
    <citation type="journal article" date="2014" name="Cancer Res.">
        <title>NACK is an integral component of the Notch transcriptional activation complex and is critical for development and tumorigenesis.</title>
        <authorList>
            <person name="Weaver K.L."/>
            <person name="Alves-Guerra M.C."/>
            <person name="Jin K."/>
            <person name="Wang Z."/>
            <person name="Han X."/>
            <person name="Ranganathan P."/>
            <person name="Zhu X."/>
            <person name="DaSilva T."/>
            <person name="Liu W."/>
            <person name="Ratti F."/>
            <person name="Demarest R.M."/>
            <person name="Tzimas C."/>
            <person name="Rice M."/>
            <person name="Vasquez-Del Carpio R."/>
            <person name="Dahmane N."/>
            <person name="Robbins D.J."/>
            <person name="Capobianco A.J."/>
        </authorList>
    </citation>
    <scope>DISRUPTION PHENOTYPE</scope>
    <scope>FUNCTION</scope>
    <scope>SUBUNIT</scope>
    <scope>INTERACTION WITH NOTCH1</scope>
    <scope>INTERACTION WITH NOTCH1 AND MAML1</scope>
    <scope>SUBCELLULAR LOCATION</scope>
</reference>
<comment type="function">
    <text evidence="1 5">Catalytically inactive protein kinase that acts as a scaffold protein (By similarity). Functions as an effector of the small GTPase RND2, which stimulates RhoA activity and inhibits NGF-induced neurite outgrowth (By similarity). Promotes Src family kinase (SFK) signaling by regulating the subcellular localization of CSK, a negative regulator of these kinases, leading to the regulation of cell morphology and motility by a CSK-dependent mechanism (By similarity). Acts as a critical coactivator of Notch signaling (PubMed:25038227).</text>
</comment>
<comment type="subunit">
    <text evidence="1 5">Homodimer (By similarity). Dimerization leads to the catalytic activation of CSK (By similarity). Interacts (via C-terminus) with RND2 (By similarity). Interacts with CSK (via SH2 domain) in a Tyr-391 phosphorylation-dependent manner; this interaction potentiates kinase activity of CSK (By similarity). Interacts with NOTCH1 intracellular domain (N1ICD) (PubMed:25038227). Forms a complex with PRAG1, N1ICD and MAML1, in a MAML1-dependent manner (PubMed:25038227).</text>
</comment>
<comment type="subcellular location">
    <subcellularLocation>
        <location evidence="1">Cytoplasm</location>
    </subcellularLocation>
    <subcellularLocation>
        <location evidence="5">Nucleus</location>
    </subcellularLocation>
    <subcellularLocation>
        <location evidence="2">Cell junction</location>
        <location evidence="2">Focal adhesion</location>
    </subcellularLocation>
    <text>Colocalized with NOTCH1 in the nucleus (PubMed:25038227).</text>
</comment>
<comment type="domain">
    <text evidence="1">The dimerization region encompasses helices both from the N- and C-terminal of the protein kinase domain.</text>
</comment>
<comment type="PTM">
    <text evidence="1">Phosphorylated by CSK on Tyr-238, Tyr-343, and Tyr-391; Tyr-391 is a primary site of phosphorylation.</text>
</comment>
<comment type="disruption phenotype">
    <text evidence="5">Deficient mice shown complete embryonic lethality (PubMed:25038227).</text>
</comment>
<comment type="similarity">
    <text evidence="7">Belongs to the protein kinase superfamily.</text>
</comment>
<comment type="caution">
    <text evidence="1">Despite of the presence of a putative ATP-binding motif, this protein does not bind ATP, suggesting that it has no protein kinase activity.</text>
</comment>
<comment type="sequence caution" evidence="7">
    <conflict type="erroneous initiation">
        <sequence resource="EMBL-CDS" id="AAH89024"/>
    </conflict>
    <text>Truncated N-terminus.</text>
</comment>
<comment type="sequence caution" evidence="7">
    <conflict type="erroneous initiation">
        <sequence resource="EMBL-CDS" id="BAC29528"/>
    </conflict>
    <text>Truncated N-terminus.</text>
</comment>
<comment type="sequence caution" evidence="7">
    <conflict type="erroneous initiation">
        <sequence resource="EMBL-CDS" id="BAD90130"/>
    </conflict>
    <text>Truncated N-terminus.</text>
</comment>
<organism>
    <name type="scientific">Mus musculus</name>
    <name type="common">Mouse</name>
    <dbReference type="NCBI Taxonomy" id="10090"/>
    <lineage>
        <taxon>Eukaryota</taxon>
        <taxon>Metazoa</taxon>
        <taxon>Chordata</taxon>
        <taxon>Craniata</taxon>
        <taxon>Vertebrata</taxon>
        <taxon>Euteleostomi</taxon>
        <taxon>Mammalia</taxon>
        <taxon>Eutheria</taxon>
        <taxon>Euarchontoglires</taxon>
        <taxon>Glires</taxon>
        <taxon>Rodentia</taxon>
        <taxon>Myomorpha</taxon>
        <taxon>Muroidea</taxon>
        <taxon>Muridae</taxon>
        <taxon>Murinae</taxon>
        <taxon>Mus</taxon>
        <taxon>Mus</taxon>
    </lineage>
</organism>
<feature type="chain" id="PRO_0000263009" description="Inactive tyrosine-protein kinase PRAG1">
    <location>
        <begin position="1"/>
        <end position="1373"/>
    </location>
</feature>
<feature type="domain" description="Protein kinase" evidence="3">
    <location>
        <begin position="945"/>
        <end position="1296"/>
    </location>
</feature>
<feature type="region of interest" description="Disordered" evidence="4">
    <location>
        <begin position="31"/>
        <end position="50"/>
    </location>
</feature>
<feature type="region of interest" description="Disordered" evidence="4">
    <location>
        <begin position="197"/>
        <end position="235"/>
    </location>
</feature>
<feature type="region of interest" description="Disordered" evidence="4">
    <location>
        <begin position="250"/>
        <end position="338"/>
    </location>
</feature>
<feature type="region of interest" description="Disordered" evidence="4">
    <location>
        <begin position="376"/>
        <end position="448"/>
    </location>
</feature>
<feature type="region of interest" description="Disordered" evidence="4">
    <location>
        <begin position="468"/>
        <end position="794"/>
    </location>
</feature>
<feature type="region of interest" description="Disordered" evidence="4">
    <location>
        <begin position="804"/>
        <end position="823"/>
    </location>
</feature>
<feature type="region of interest" description="Required for homodimerization" evidence="1">
    <location>
        <begin position="911"/>
        <end position="954"/>
    </location>
</feature>
<feature type="region of interest" description="Disordered" evidence="4">
    <location>
        <begin position="1041"/>
        <end position="1062"/>
    </location>
</feature>
<feature type="region of interest" description="Disordered" evidence="4">
    <location>
        <begin position="1138"/>
        <end position="1171"/>
    </location>
</feature>
<feature type="region of interest" description="Required for homodimerization" evidence="1">
    <location>
        <begin position="1298"/>
        <end position="1373"/>
    </location>
</feature>
<feature type="compositionally biased region" description="Basic and acidic residues" evidence="4">
    <location>
        <begin position="250"/>
        <end position="263"/>
    </location>
</feature>
<feature type="compositionally biased region" description="Basic and acidic residues" evidence="4">
    <location>
        <begin position="272"/>
        <end position="284"/>
    </location>
</feature>
<feature type="compositionally biased region" description="Low complexity" evidence="4">
    <location>
        <begin position="317"/>
        <end position="333"/>
    </location>
</feature>
<feature type="compositionally biased region" description="Polar residues" evidence="4">
    <location>
        <begin position="419"/>
        <end position="438"/>
    </location>
</feature>
<feature type="compositionally biased region" description="Basic and acidic residues" evidence="4">
    <location>
        <begin position="506"/>
        <end position="522"/>
    </location>
</feature>
<feature type="compositionally biased region" description="Low complexity" evidence="4">
    <location>
        <begin position="526"/>
        <end position="538"/>
    </location>
</feature>
<feature type="compositionally biased region" description="Polar residues" evidence="4">
    <location>
        <begin position="568"/>
        <end position="578"/>
    </location>
</feature>
<feature type="compositionally biased region" description="Polar residues" evidence="4">
    <location>
        <begin position="655"/>
        <end position="670"/>
    </location>
</feature>
<feature type="compositionally biased region" description="Polar residues" evidence="4">
    <location>
        <begin position="711"/>
        <end position="721"/>
    </location>
</feature>
<feature type="compositionally biased region" description="Polar residues" evidence="4">
    <location>
        <begin position="729"/>
        <end position="740"/>
    </location>
</feature>
<feature type="compositionally biased region" description="Polar residues" evidence="4">
    <location>
        <begin position="1041"/>
        <end position="1050"/>
    </location>
</feature>
<feature type="compositionally biased region" description="Low complexity" evidence="4">
    <location>
        <begin position="1139"/>
        <end position="1167"/>
    </location>
</feature>
<feature type="modified residue" description="Phosphotyrosine" evidence="1">
    <location>
        <position position="238"/>
    </location>
</feature>
<feature type="modified residue" description="Phosphotyrosine" evidence="1">
    <location>
        <position position="343"/>
    </location>
</feature>
<feature type="modified residue" description="Phosphotyrosine" evidence="1 9">
    <location>
        <position position="391"/>
    </location>
</feature>
<feature type="modified residue" description="Phosphoserine" evidence="2">
    <location>
        <position position="671"/>
    </location>
</feature>
<feature type="modified residue" description="Phosphoserine" evidence="10">
    <location>
        <position position="720"/>
    </location>
</feature>
<feature type="modified residue" description="Phosphoserine" evidence="2">
    <location>
        <position position="757"/>
    </location>
</feature>
<feature type="modified residue" description="Phosphoserine" evidence="2">
    <location>
        <position position="802"/>
    </location>
</feature>
<feature type="sequence conflict" description="In Ref. 2; BAC29528." evidence="7" ref="2">
    <original>LEA</original>
    <variation>PGG</variation>
    <location>
        <begin position="154"/>
        <end position="156"/>
    </location>
</feature>
<feature type="sequence conflict" description="In Ref. 3; BAD90130." evidence="7" ref="3">
    <original>LA</original>
    <variation>VD</variation>
    <location>
        <begin position="190"/>
        <end position="191"/>
    </location>
</feature>
<feature type="sequence conflict" description="In Ref. 3; BAD90130." evidence="7" ref="3">
    <original>D</original>
    <variation>Y</variation>
    <location>
        <position position="243"/>
    </location>
</feature>
<feature type="sequence conflict" description="In Ref. 3; BAD90130." evidence="7" ref="3">
    <original>R</original>
    <variation>C</variation>
    <location>
        <position position="261"/>
    </location>
</feature>
<feature type="sequence conflict" description="In Ref. 3; BAD90130." evidence="7" ref="3">
    <original>G</original>
    <variation>S</variation>
    <location>
        <position position="493"/>
    </location>
</feature>
<feature type="sequence conflict" description="In Ref. 3; BAD90130." evidence="7" ref="3">
    <original>T</original>
    <variation>I</variation>
    <location>
        <position position="504"/>
    </location>
</feature>
<feature type="sequence conflict" description="In Ref. 3; BAD90130." evidence="7" ref="3">
    <original>V</original>
    <variation>M</variation>
    <location>
        <position position="513"/>
    </location>
</feature>
<feature type="sequence conflict" description="In Ref. 3; BAD90130." evidence="7" ref="3">
    <original>A</original>
    <variation>V</variation>
    <location>
        <position position="786"/>
    </location>
</feature>
<feature type="sequence conflict" description="In Ref. 3; BAD90130." evidence="7" ref="3">
    <original>G</original>
    <variation>E</variation>
    <location>
        <position position="861"/>
    </location>
</feature>
<feature type="sequence conflict" description="In Ref. 3; BAD90130." evidence="7" ref="3">
    <original>S</original>
    <variation>I</variation>
    <location>
        <position position="1139"/>
    </location>
</feature>
<feature type="sequence conflict" description="In Ref. 3; BAD90130." evidence="7" ref="3">
    <original>A</original>
    <variation>V</variation>
    <location>
        <position position="1160"/>
    </location>
</feature>
<name>PRAG1_MOUSE</name>
<accession>Q571I4</accession>
<accession>E9QLH9</accession>
<accession>Q8CB68</accession>
<proteinExistence type="evidence at protein level"/>
<keyword id="KW-0965">Cell junction</keyword>
<keyword id="KW-0963">Cytoplasm</keyword>
<keyword id="KW-0539">Nucleus</keyword>
<keyword id="KW-0597">Phosphoprotein</keyword>
<keyword id="KW-1185">Reference proteome</keyword>